<dbReference type="EMBL" id="CP000046">
    <property type="protein sequence ID" value="AAW37780.1"/>
    <property type="status" value="ALT_INIT"/>
    <property type="molecule type" value="Genomic_DNA"/>
</dbReference>
<dbReference type="RefSeq" id="WP_001166505.1">
    <property type="nucleotide sequence ID" value="NZ_JBGOFO010000005.1"/>
</dbReference>
<dbReference type="SMR" id="Q5HI09"/>
<dbReference type="KEGG" id="sac:SACOL0716"/>
<dbReference type="HOGENOM" id="CLU_000445_30_3_9"/>
<dbReference type="Proteomes" id="UP000000530">
    <property type="component" value="Chromosome"/>
</dbReference>
<dbReference type="GO" id="GO:0005829">
    <property type="term" value="C:cytosol"/>
    <property type="evidence" value="ECO:0007669"/>
    <property type="project" value="TreeGrafter"/>
</dbReference>
<dbReference type="GO" id="GO:0032993">
    <property type="term" value="C:protein-DNA complex"/>
    <property type="evidence" value="ECO:0007669"/>
    <property type="project" value="TreeGrafter"/>
</dbReference>
<dbReference type="GO" id="GO:0000156">
    <property type="term" value="F:phosphorelay response regulator activity"/>
    <property type="evidence" value="ECO:0007669"/>
    <property type="project" value="TreeGrafter"/>
</dbReference>
<dbReference type="GO" id="GO:0000976">
    <property type="term" value="F:transcription cis-regulatory region binding"/>
    <property type="evidence" value="ECO:0007669"/>
    <property type="project" value="TreeGrafter"/>
</dbReference>
<dbReference type="GO" id="GO:0006355">
    <property type="term" value="P:regulation of DNA-templated transcription"/>
    <property type="evidence" value="ECO:0007669"/>
    <property type="project" value="InterPro"/>
</dbReference>
<dbReference type="GO" id="GO:0046677">
    <property type="term" value="P:response to antibiotic"/>
    <property type="evidence" value="ECO:0007669"/>
    <property type="project" value="UniProtKB-KW"/>
</dbReference>
<dbReference type="CDD" id="cd18159">
    <property type="entry name" value="REC_OmpR_NsrR-like"/>
    <property type="match status" value="1"/>
</dbReference>
<dbReference type="CDD" id="cd00383">
    <property type="entry name" value="trans_reg_C"/>
    <property type="match status" value="1"/>
</dbReference>
<dbReference type="FunFam" id="3.40.50.2300:FF:000232">
    <property type="entry name" value="Response regulator GraR"/>
    <property type="match status" value="1"/>
</dbReference>
<dbReference type="FunFam" id="1.10.10.10:FF:000546">
    <property type="entry name" value="Two-component response regulator GraR"/>
    <property type="match status" value="1"/>
</dbReference>
<dbReference type="Gene3D" id="3.40.50.2300">
    <property type="match status" value="1"/>
</dbReference>
<dbReference type="Gene3D" id="1.10.10.10">
    <property type="entry name" value="Winged helix-like DNA-binding domain superfamily/Winged helix DNA-binding domain"/>
    <property type="match status" value="1"/>
</dbReference>
<dbReference type="InterPro" id="IPR011006">
    <property type="entry name" value="CheY-like_superfamily"/>
</dbReference>
<dbReference type="InterPro" id="IPR001867">
    <property type="entry name" value="OmpR/PhoB-type_DNA-bd"/>
</dbReference>
<dbReference type="InterPro" id="IPR016032">
    <property type="entry name" value="Sig_transdc_resp-reg_C-effctor"/>
</dbReference>
<dbReference type="InterPro" id="IPR001789">
    <property type="entry name" value="Sig_transdc_resp-reg_receiver"/>
</dbReference>
<dbReference type="InterPro" id="IPR039420">
    <property type="entry name" value="WalR-like"/>
</dbReference>
<dbReference type="InterPro" id="IPR036388">
    <property type="entry name" value="WH-like_DNA-bd_sf"/>
</dbReference>
<dbReference type="PANTHER" id="PTHR48111">
    <property type="entry name" value="REGULATOR OF RPOS"/>
    <property type="match status" value="1"/>
</dbReference>
<dbReference type="PANTHER" id="PTHR48111:SF27">
    <property type="entry name" value="SENSORY TRANSDUCTION PROTEIN BCER"/>
    <property type="match status" value="1"/>
</dbReference>
<dbReference type="Pfam" id="PF00072">
    <property type="entry name" value="Response_reg"/>
    <property type="match status" value="1"/>
</dbReference>
<dbReference type="Pfam" id="PF00486">
    <property type="entry name" value="Trans_reg_C"/>
    <property type="match status" value="1"/>
</dbReference>
<dbReference type="SMART" id="SM00448">
    <property type="entry name" value="REC"/>
    <property type="match status" value="1"/>
</dbReference>
<dbReference type="SMART" id="SM00862">
    <property type="entry name" value="Trans_reg_C"/>
    <property type="match status" value="1"/>
</dbReference>
<dbReference type="SUPFAM" id="SSF46894">
    <property type="entry name" value="C-terminal effector domain of the bipartite response regulators"/>
    <property type="match status" value="1"/>
</dbReference>
<dbReference type="SUPFAM" id="SSF52172">
    <property type="entry name" value="CheY-like"/>
    <property type="match status" value="1"/>
</dbReference>
<dbReference type="PROSITE" id="PS51755">
    <property type="entry name" value="OMPR_PHOB"/>
    <property type="match status" value="1"/>
</dbReference>
<dbReference type="PROSITE" id="PS50110">
    <property type="entry name" value="RESPONSE_REGULATORY"/>
    <property type="match status" value="1"/>
</dbReference>
<feature type="chain" id="PRO_0000347896" description="Response regulator protein GraR">
    <location>
        <begin position="1"/>
        <end position="224"/>
    </location>
</feature>
<feature type="domain" description="Response regulatory" evidence="4">
    <location>
        <begin position="2"/>
        <end position="115"/>
    </location>
</feature>
<feature type="DNA-binding region" description="OmpR/PhoB-type" evidence="5">
    <location>
        <begin position="126"/>
        <end position="224"/>
    </location>
</feature>
<feature type="modified residue" description="4-aspartylphosphate" evidence="4">
    <location>
        <position position="51"/>
    </location>
</feature>
<feature type="modified residue" description="Phosphothreonine" evidence="3">
    <location>
        <position position="128"/>
    </location>
</feature>
<feature type="modified residue" description="Phosphothreonine" evidence="3">
    <location>
        <position position="130"/>
    </location>
</feature>
<feature type="modified residue" description="Phosphothreonine" evidence="3">
    <location>
        <position position="149"/>
    </location>
</feature>
<keyword id="KW-0010">Activator</keyword>
<keyword id="KW-0046">Antibiotic resistance</keyword>
<keyword id="KW-0963">Cytoplasm</keyword>
<keyword id="KW-0238">DNA-binding</keyword>
<keyword id="KW-0597">Phosphoprotein</keyword>
<keyword id="KW-0678">Repressor</keyword>
<keyword id="KW-0804">Transcription</keyword>
<keyword id="KW-0805">Transcription regulation</keyword>
<keyword id="KW-0902">Two-component regulatory system</keyword>
<keyword id="KW-0843">Virulence</keyword>
<accession>Q5HI09</accession>
<name>GRAR_STAAC</name>
<gene>
    <name type="primary">graR</name>
    <name type="ordered locus">SACOL0716</name>
</gene>
<sequence>MQILLVEDDNTLFQELKKELEQWDFNVAGIEDFGKVMDTFESFNPEIVILDVQLPKYDGFYWCRKMREVSNVPILFLSSRDNPMDQVMSMELGADDYMQKPFYTNVLIAKLQAIYRRVYEFTAEEKRTLTWQDAVVDLSKDSIQKGDQTIFLSKTEMIILEILITKKNQIVSRDTIITALWDDEAFVSDNTLTVNVNRLRKKLSEISMDSAIETKVGKGYMAHE</sequence>
<proteinExistence type="evidence at protein level"/>
<organism>
    <name type="scientific">Staphylococcus aureus (strain COL)</name>
    <dbReference type="NCBI Taxonomy" id="93062"/>
    <lineage>
        <taxon>Bacteria</taxon>
        <taxon>Bacillati</taxon>
        <taxon>Bacillota</taxon>
        <taxon>Bacilli</taxon>
        <taxon>Bacillales</taxon>
        <taxon>Staphylococcaceae</taxon>
        <taxon>Staphylococcus</taxon>
    </lineage>
</organism>
<reference key="1">
    <citation type="journal article" date="2005" name="J. Bacteriol.">
        <title>Insights on evolution of virulence and resistance from the complete genome analysis of an early methicillin-resistant Staphylococcus aureus strain and a biofilm-producing methicillin-resistant Staphylococcus epidermidis strain.</title>
        <authorList>
            <person name="Gill S.R."/>
            <person name="Fouts D.E."/>
            <person name="Archer G.L."/>
            <person name="Mongodin E.F."/>
            <person name="DeBoy R.T."/>
            <person name="Ravel J."/>
            <person name="Paulsen I.T."/>
            <person name="Kolonay J.F."/>
            <person name="Brinkac L.M."/>
            <person name="Beanan M.J."/>
            <person name="Dodson R.J."/>
            <person name="Daugherty S.C."/>
            <person name="Madupu R."/>
            <person name="Angiuoli S.V."/>
            <person name="Durkin A.S."/>
            <person name="Haft D.H."/>
            <person name="Vamathevan J.J."/>
            <person name="Khouri H."/>
            <person name="Utterback T.R."/>
            <person name="Lee C."/>
            <person name="Dimitrov G."/>
            <person name="Jiang L."/>
            <person name="Qin H."/>
            <person name="Weidman J."/>
            <person name="Tran K."/>
            <person name="Kang K.H."/>
            <person name="Hance I.R."/>
            <person name="Nelson K.E."/>
            <person name="Fraser C.M."/>
        </authorList>
    </citation>
    <scope>NUCLEOTIDE SEQUENCE [LARGE SCALE GENOMIC DNA]</scope>
    <source>
        <strain>COL</strain>
    </source>
</reference>
<reference key="2">
    <citation type="journal article" date="2007" name="Antimicrob. Agents Chemother.">
        <title>Interaction of the graRS two-component system with the vraFG ABC transporter to support vancomycin-intermediate resistance in Staphylococcus aureus.</title>
        <authorList>
            <person name="Meehl M."/>
            <person name="Herbert S."/>
            <person name="Goetz F."/>
            <person name="Cheung A."/>
        </authorList>
    </citation>
    <scope>FUNCTION IN CATIONIC ANTIMICROBIAL PEPTIDE RESISTANCE</scope>
</reference>
<comment type="function">
    <text evidence="3 6">Member of the two-component regulatory system GraR/GraS involved in resistance against cationic antimicrobial peptides (CAMPs) (By similarity) (PubMed:17502406). Upon phosphorylation by GraS, functions as a transcription regulator by direct binding to promoter regions of target genes such as adhesins, exoproteins, transporters, toxins, and proteins involved in cell wall synthesis. Down-regulates the expression of many genes involved in RNA and amino acid synthesis or glycolysis (By similarity).</text>
</comment>
<comment type="subunit">
    <text evidence="2">Interacts with GraX.</text>
</comment>
<comment type="subcellular location">
    <subcellularLocation>
        <location evidence="1">Cytoplasm</location>
    </subcellularLocation>
</comment>
<comment type="PTM">
    <text evidence="3">Phosphorylated by GraS. Phosphorylated by Stk1; phosphorylation increases the DNA-binding activity of GraR.</text>
</comment>
<comment type="sequence caution" evidence="7">
    <conflict type="erroneous initiation">
        <sequence resource="EMBL-CDS" id="AAW37780"/>
    </conflict>
</comment>
<evidence type="ECO:0000250" key="1"/>
<evidence type="ECO:0000250" key="2">
    <source>
        <dbReference type="UniProtKB" id="Q2G0D9"/>
    </source>
</evidence>
<evidence type="ECO:0000250" key="3">
    <source>
        <dbReference type="UniProtKB" id="Q2G0E0"/>
    </source>
</evidence>
<evidence type="ECO:0000255" key="4">
    <source>
        <dbReference type="PROSITE-ProRule" id="PRU00169"/>
    </source>
</evidence>
<evidence type="ECO:0000255" key="5">
    <source>
        <dbReference type="PROSITE-ProRule" id="PRU01091"/>
    </source>
</evidence>
<evidence type="ECO:0000269" key="6">
    <source>
    </source>
</evidence>
<evidence type="ECO:0000305" key="7"/>
<protein>
    <recommendedName>
        <fullName>Response regulator protein GraR</fullName>
    </recommendedName>
    <alternativeName>
        <fullName>Glycopeptide resistance-associated protein R</fullName>
    </alternativeName>
</protein>